<protein>
    <recommendedName>
        <fullName evidence="1">3-isopropylmalate dehydratase large subunit</fullName>
        <ecNumber evidence="1">4.2.1.33</ecNumber>
    </recommendedName>
    <alternativeName>
        <fullName evidence="1">Alpha-IPM isomerase</fullName>
        <shortName evidence="1">IPMI</shortName>
    </alternativeName>
    <alternativeName>
        <fullName evidence="1">Isopropylmalate isomerase</fullName>
    </alternativeName>
</protein>
<keyword id="KW-0004">4Fe-4S</keyword>
<keyword id="KW-0028">Amino-acid biosynthesis</keyword>
<keyword id="KW-0100">Branched-chain amino acid biosynthesis</keyword>
<keyword id="KW-0408">Iron</keyword>
<keyword id="KW-0411">Iron-sulfur</keyword>
<keyword id="KW-0432">Leucine biosynthesis</keyword>
<keyword id="KW-0456">Lyase</keyword>
<keyword id="KW-0479">Metal-binding</keyword>
<name>LEUC_NITV4</name>
<comment type="function">
    <text evidence="1">Catalyzes the isomerization between 2-isopropylmalate and 3-isopropylmalate, via the formation of 2-isopropylmaleate.</text>
</comment>
<comment type="catalytic activity">
    <reaction evidence="1">
        <text>(2R,3S)-3-isopropylmalate = (2S)-2-isopropylmalate</text>
        <dbReference type="Rhea" id="RHEA:32287"/>
        <dbReference type="ChEBI" id="CHEBI:1178"/>
        <dbReference type="ChEBI" id="CHEBI:35121"/>
        <dbReference type="EC" id="4.2.1.33"/>
    </reaction>
</comment>
<comment type="cofactor">
    <cofactor evidence="1">
        <name>[4Fe-4S] cluster</name>
        <dbReference type="ChEBI" id="CHEBI:49883"/>
    </cofactor>
    <text evidence="1">Binds 1 [4Fe-4S] cluster per subunit.</text>
</comment>
<comment type="pathway">
    <text evidence="1">Amino-acid biosynthesis; L-leucine biosynthesis; L-leucine from 3-methyl-2-oxobutanoate: step 2/4.</text>
</comment>
<comment type="subunit">
    <text evidence="1">Heterodimer of LeuC and LeuD.</text>
</comment>
<comment type="similarity">
    <text evidence="1">Belongs to the aconitase/IPM isomerase family. LeuC type 2 subfamily.</text>
</comment>
<gene>
    <name evidence="1" type="primary">leuC</name>
    <name type="ordered locus">Dvul_0390</name>
</gene>
<organism>
    <name type="scientific">Nitratidesulfovibrio vulgaris (strain DP4)</name>
    <name type="common">Desulfovibrio vulgaris</name>
    <dbReference type="NCBI Taxonomy" id="391774"/>
    <lineage>
        <taxon>Bacteria</taxon>
        <taxon>Pseudomonadati</taxon>
        <taxon>Thermodesulfobacteriota</taxon>
        <taxon>Desulfovibrionia</taxon>
        <taxon>Desulfovibrionales</taxon>
        <taxon>Desulfovibrionaceae</taxon>
        <taxon>Nitratidesulfovibrio</taxon>
    </lineage>
</organism>
<accession>A1VAE7</accession>
<sequence>MAHTLAQKILQRHTDEAITDAGQIVRCRVSMVLANDITAPLAIKSFRAMGAKRVFDKDRVALVMDHFTPQKDIEAAQQVKLTREFAREMGVTHYYEGGDCGVEHALLPELGLVGPGDVVVGADSHTCTYGGLGAFATGLGSTDVAGAMALGETWFKVPPTIRATFTGTLPAYVGAKDLILTLIGAIGVDGALYRALEFDGAAIEALDVEGRMTMANMAIEAGGKAGLFAADAKTLTYCTAAGRTGDAAFSADAGAVYERELSFDVTGMTPVVACPHLPDNVKPVSEVKDVTVQQVVIGSCTNGRIGDLREAAAVLRGRKVSRDVRCIVLPATPGIWRQALREGLIETFMEAGCIVGPATCGPCLGGHMGILADGERAIATTNRNFKGRMGSLESEVYLSGPATAAASAVTGVITDPSTL</sequence>
<proteinExistence type="inferred from homology"/>
<dbReference type="EC" id="4.2.1.33" evidence="1"/>
<dbReference type="EMBL" id="CP000527">
    <property type="protein sequence ID" value="ABM27413.1"/>
    <property type="molecule type" value="Genomic_DNA"/>
</dbReference>
<dbReference type="RefSeq" id="WP_011791592.1">
    <property type="nucleotide sequence ID" value="NC_008751.1"/>
</dbReference>
<dbReference type="SMR" id="A1VAE7"/>
<dbReference type="KEGG" id="dvl:Dvul_0390"/>
<dbReference type="HOGENOM" id="CLU_006714_3_4_7"/>
<dbReference type="UniPathway" id="UPA00048">
    <property type="reaction ID" value="UER00071"/>
</dbReference>
<dbReference type="Proteomes" id="UP000009173">
    <property type="component" value="Chromosome"/>
</dbReference>
<dbReference type="GO" id="GO:0003861">
    <property type="term" value="F:3-isopropylmalate dehydratase activity"/>
    <property type="evidence" value="ECO:0007669"/>
    <property type="project" value="UniProtKB-UniRule"/>
</dbReference>
<dbReference type="GO" id="GO:0051539">
    <property type="term" value="F:4 iron, 4 sulfur cluster binding"/>
    <property type="evidence" value="ECO:0007669"/>
    <property type="project" value="UniProtKB-KW"/>
</dbReference>
<dbReference type="GO" id="GO:0046872">
    <property type="term" value="F:metal ion binding"/>
    <property type="evidence" value="ECO:0007669"/>
    <property type="project" value="UniProtKB-KW"/>
</dbReference>
<dbReference type="GO" id="GO:0009098">
    <property type="term" value="P:L-leucine biosynthetic process"/>
    <property type="evidence" value="ECO:0007669"/>
    <property type="project" value="UniProtKB-UniRule"/>
</dbReference>
<dbReference type="CDD" id="cd01583">
    <property type="entry name" value="IPMI"/>
    <property type="match status" value="1"/>
</dbReference>
<dbReference type="Gene3D" id="3.30.499.10">
    <property type="entry name" value="Aconitase, domain 3"/>
    <property type="match status" value="2"/>
</dbReference>
<dbReference type="HAMAP" id="MF_01027">
    <property type="entry name" value="LeuC_type2"/>
    <property type="match status" value="1"/>
</dbReference>
<dbReference type="InterPro" id="IPR015931">
    <property type="entry name" value="Acnase/IPM_dHydase_lsu_aba_1/3"/>
</dbReference>
<dbReference type="InterPro" id="IPR001030">
    <property type="entry name" value="Acoase/IPM_deHydtase_lsu_aba"/>
</dbReference>
<dbReference type="InterPro" id="IPR018136">
    <property type="entry name" value="Aconitase_4Fe-4S_BS"/>
</dbReference>
<dbReference type="InterPro" id="IPR036008">
    <property type="entry name" value="Aconitase_4Fe-4S_dom"/>
</dbReference>
<dbReference type="InterPro" id="IPR011826">
    <property type="entry name" value="HAcnase/IPMdehydase_lsu_prok"/>
</dbReference>
<dbReference type="InterPro" id="IPR006251">
    <property type="entry name" value="Homoacnase/IPMdehydase_lsu"/>
</dbReference>
<dbReference type="InterPro" id="IPR050067">
    <property type="entry name" value="IPM_dehydratase_rel_enz"/>
</dbReference>
<dbReference type="InterPro" id="IPR033941">
    <property type="entry name" value="IPMI_cat"/>
</dbReference>
<dbReference type="NCBIfam" id="TIGR01343">
    <property type="entry name" value="hacA_fam"/>
    <property type="match status" value="1"/>
</dbReference>
<dbReference type="NCBIfam" id="TIGR02086">
    <property type="entry name" value="IPMI_arch"/>
    <property type="match status" value="1"/>
</dbReference>
<dbReference type="NCBIfam" id="NF001614">
    <property type="entry name" value="PRK00402.1"/>
    <property type="match status" value="1"/>
</dbReference>
<dbReference type="PANTHER" id="PTHR43822:SF16">
    <property type="entry name" value="3-ISOPROPYLMALATE DEHYDRATASE LARGE SUBUNIT 2"/>
    <property type="match status" value="1"/>
</dbReference>
<dbReference type="PANTHER" id="PTHR43822">
    <property type="entry name" value="HOMOACONITASE, MITOCHONDRIAL-RELATED"/>
    <property type="match status" value="1"/>
</dbReference>
<dbReference type="Pfam" id="PF00330">
    <property type="entry name" value="Aconitase"/>
    <property type="match status" value="2"/>
</dbReference>
<dbReference type="PRINTS" id="PR00415">
    <property type="entry name" value="ACONITASE"/>
</dbReference>
<dbReference type="SUPFAM" id="SSF53732">
    <property type="entry name" value="Aconitase iron-sulfur domain"/>
    <property type="match status" value="1"/>
</dbReference>
<dbReference type="PROSITE" id="PS00450">
    <property type="entry name" value="ACONITASE_1"/>
    <property type="match status" value="1"/>
</dbReference>
<dbReference type="PROSITE" id="PS01244">
    <property type="entry name" value="ACONITASE_2"/>
    <property type="match status" value="1"/>
</dbReference>
<evidence type="ECO:0000255" key="1">
    <source>
        <dbReference type="HAMAP-Rule" id="MF_01027"/>
    </source>
</evidence>
<reference key="1">
    <citation type="journal article" date="2009" name="Environ. Microbiol.">
        <title>Contribution of mobile genetic elements to Desulfovibrio vulgaris genome plasticity.</title>
        <authorList>
            <person name="Walker C.B."/>
            <person name="Stolyar S."/>
            <person name="Chivian D."/>
            <person name="Pinel N."/>
            <person name="Gabster J.A."/>
            <person name="Dehal P.S."/>
            <person name="He Z."/>
            <person name="Yang Z.K."/>
            <person name="Yen H.C."/>
            <person name="Zhou J."/>
            <person name="Wall J.D."/>
            <person name="Hazen T.C."/>
            <person name="Arkin A.P."/>
            <person name="Stahl D.A."/>
        </authorList>
    </citation>
    <scope>NUCLEOTIDE SEQUENCE [LARGE SCALE GENOMIC DNA]</scope>
    <source>
        <strain>DP4</strain>
    </source>
</reference>
<feature type="chain" id="PRO_1000063647" description="3-isopropylmalate dehydratase large subunit">
    <location>
        <begin position="1"/>
        <end position="419"/>
    </location>
</feature>
<feature type="binding site" evidence="1">
    <location>
        <position position="300"/>
    </location>
    <ligand>
        <name>[4Fe-4S] cluster</name>
        <dbReference type="ChEBI" id="CHEBI:49883"/>
    </ligand>
</feature>
<feature type="binding site" evidence="1">
    <location>
        <position position="360"/>
    </location>
    <ligand>
        <name>[4Fe-4S] cluster</name>
        <dbReference type="ChEBI" id="CHEBI:49883"/>
    </ligand>
</feature>
<feature type="binding site" evidence="1">
    <location>
        <position position="363"/>
    </location>
    <ligand>
        <name>[4Fe-4S] cluster</name>
        <dbReference type="ChEBI" id="CHEBI:49883"/>
    </ligand>
</feature>